<feature type="chain" id="PRO_0000216106" description="UPF0302 protein SA1295">
    <location>
        <begin position="1"/>
        <end position="191"/>
    </location>
</feature>
<protein>
    <recommendedName>
        <fullName evidence="1">UPF0302 protein SA1295</fullName>
    </recommendedName>
</protein>
<accession>P67760</accession>
<accession>Q99U27</accession>
<evidence type="ECO:0000255" key="1">
    <source>
        <dbReference type="HAMAP-Rule" id="MF_00760"/>
    </source>
</evidence>
<name>Y1295_STAAN</name>
<proteinExistence type="inferred from homology"/>
<organism>
    <name type="scientific">Staphylococcus aureus (strain N315)</name>
    <dbReference type="NCBI Taxonomy" id="158879"/>
    <lineage>
        <taxon>Bacteria</taxon>
        <taxon>Bacillati</taxon>
        <taxon>Bacillota</taxon>
        <taxon>Bacilli</taxon>
        <taxon>Bacillales</taxon>
        <taxon>Staphylococcaceae</taxon>
        <taxon>Staphylococcus</taxon>
    </lineage>
</organism>
<comment type="similarity">
    <text evidence="1">Belongs to the UPF0302 family.</text>
</comment>
<reference key="1">
    <citation type="journal article" date="2001" name="Lancet">
        <title>Whole genome sequencing of meticillin-resistant Staphylococcus aureus.</title>
        <authorList>
            <person name="Kuroda M."/>
            <person name="Ohta T."/>
            <person name="Uchiyama I."/>
            <person name="Baba T."/>
            <person name="Yuzawa H."/>
            <person name="Kobayashi I."/>
            <person name="Cui L."/>
            <person name="Oguchi A."/>
            <person name="Aoki K."/>
            <person name="Nagai Y."/>
            <person name="Lian J.-Q."/>
            <person name="Ito T."/>
            <person name="Kanamori M."/>
            <person name="Matsumaru H."/>
            <person name="Maruyama A."/>
            <person name="Murakami H."/>
            <person name="Hosoyama A."/>
            <person name="Mizutani-Ui Y."/>
            <person name="Takahashi N.K."/>
            <person name="Sawano T."/>
            <person name="Inoue R."/>
            <person name="Kaito C."/>
            <person name="Sekimizu K."/>
            <person name="Hirakawa H."/>
            <person name="Kuhara S."/>
            <person name="Goto S."/>
            <person name="Yabuzaki J."/>
            <person name="Kanehisa M."/>
            <person name="Yamashita A."/>
            <person name="Oshima K."/>
            <person name="Furuya K."/>
            <person name="Yoshino C."/>
            <person name="Shiba T."/>
            <person name="Hattori M."/>
            <person name="Ogasawara N."/>
            <person name="Hayashi H."/>
            <person name="Hiramatsu K."/>
        </authorList>
    </citation>
    <scope>NUCLEOTIDE SEQUENCE [LARGE SCALE GENOMIC DNA]</scope>
    <source>
        <strain>N315</strain>
    </source>
</reference>
<sequence length="191" mass="22564">MSETLNQIKESFIEYLLFQYRFKSRIAVWVLNYIKVNEAKLANIHFVDTKINHHETLEIAEVGSHASAIQFTKRNIKLMNTNEIFDYIANHNCAFDIQIHFANVSKREQRLDDLIVAQLTESPSYQTYLHDLNSMAIDRHKHALLIDYLLHNIDLSLQMNEKQRFYQLTQILNTLKLVNKHNQFEDLADDD</sequence>
<dbReference type="EMBL" id="BA000018">
    <property type="protein sequence ID" value="BAB42555.1"/>
    <property type="molecule type" value="Genomic_DNA"/>
</dbReference>
<dbReference type="PIR" id="F89924">
    <property type="entry name" value="F89924"/>
</dbReference>
<dbReference type="RefSeq" id="WP_000005212.1">
    <property type="nucleotide sequence ID" value="NC_002745.2"/>
</dbReference>
<dbReference type="SMR" id="P67760"/>
<dbReference type="EnsemblBacteria" id="BAB42555">
    <property type="protein sequence ID" value="BAB42555"/>
    <property type="gene ID" value="BAB42555"/>
</dbReference>
<dbReference type="KEGG" id="sau:SA1295"/>
<dbReference type="HOGENOM" id="CLU_122408_0_0_9"/>
<dbReference type="Gene3D" id="3.40.1530.30">
    <property type="entry name" value="Uncharacterised family UPF0302, N-terminal domain"/>
    <property type="match status" value="1"/>
</dbReference>
<dbReference type="HAMAP" id="MF_00760">
    <property type="entry name" value="UPF0302"/>
    <property type="match status" value="1"/>
</dbReference>
<dbReference type="InterPro" id="IPR014957">
    <property type="entry name" value="IDEAL_dom"/>
</dbReference>
<dbReference type="InterPro" id="IPR011188">
    <property type="entry name" value="UPF0302"/>
</dbReference>
<dbReference type="InterPro" id="IPR014963">
    <property type="entry name" value="UPF0302_N"/>
</dbReference>
<dbReference type="InterPro" id="IPR038091">
    <property type="entry name" value="UPF0302_N_sf"/>
</dbReference>
<dbReference type="Pfam" id="PF08858">
    <property type="entry name" value="IDEAL"/>
    <property type="match status" value="1"/>
</dbReference>
<dbReference type="Pfam" id="PF08864">
    <property type="entry name" value="UPF0302"/>
    <property type="match status" value="1"/>
</dbReference>
<dbReference type="PIRSF" id="PIRSF007165">
    <property type="entry name" value="UCP007165"/>
    <property type="match status" value="1"/>
</dbReference>
<dbReference type="SMART" id="SM00914">
    <property type="entry name" value="IDEAL"/>
    <property type="match status" value="1"/>
</dbReference>
<gene>
    <name type="ordered locus">SA1295</name>
</gene>